<gene>
    <name evidence="1" type="primary">ilvC</name>
    <name type="ordered locus">EcE24377A_4285</name>
</gene>
<keyword id="KW-0028">Amino-acid biosynthesis</keyword>
<keyword id="KW-0100">Branched-chain amino acid biosynthesis</keyword>
<keyword id="KW-0460">Magnesium</keyword>
<keyword id="KW-0479">Metal-binding</keyword>
<keyword id="KW-0521">NADP</keyword>
<keyword id="KW-0560">Oxidoreductase</keyword>
<keyword id="KW-1185">Reference proteome</keyword>
<keyword id="KW-0677">Repeat</keyword>
<proteinExistence type="inferred from homology"/>
<accession>A7ZTX6</accession>
<sequence>MANYFNTLNLRQQLAQLGKCRFMGRDEFADGASYLQGKKVVIVGCGAQGLNQGLNMRDSGLDISYALRKEAIAEKRASWRKATENGFKVGTYEELIPQADLVVNLTPDKQHSDVVRTVQPLMKDGAALGYSHGFNIVEVGEQIRKDITVVMVAPKCPGTEVREEYKRGFGVPTLIAVHPENDPKGEGMAIAKAWAAATGGHRAGVLESSFVAEVKSDLMGEQTILCGMLQAGSLLCFDKLVEEGTDPAYAEKLIQFGWETITEALKQGGITLMMDRLSNPAKLRAYALSEQLKEIMAPLFQKHMDDIISGEFSSGMMADWANDDKKLLTWREETGKTAFETAPQYEGKIGEQEYFDKGVLMIAMVKAGVELAFETMVDSGIIEESAYYESLHELPLIANTIARKRLYEMNVVISDTAEYGNYLFSYACVPLLKPFMAELQPGDLGKAIPEGAVDNAQLRDVNEAIRSHAIEQVGKKLRGYMTDMKRIAVAG</sequence>
<reference key="1">
    <citation type="journal article" date="2008" name="J. Bacteriol.">
        <title>The pangenome structure of Escherichia coli: comparative genomic analysis of E. coli commensal and pathogenic isolates.</title>
        <authorList>
            <person name="Rasko D.A."/>
            <person name="Rosovitz M.J."/>
            <person name="Myers G.S.A."/>
            <person name="Mongodin E.F."/>
            <person name="Fricke W.F."/>
            <person name="Gajer P."/>
            <person name="Crabtree J."/>
            <person name="Sebaihia M."/>
            <person name="Thomson N.R."/>
            <person name="Chaudhuri R."/>
            <person name="Henderson I.R."/>
            <person name="Sperandio V."/>
            <person name="Ravel J."/>
        </authorList>
    </citation>
    <scope>NUCLEOTIDE SEQUENCE [LARGE SCALE GENOMIC DNA]</scope>
    <source>
        <strain>E24377A / ETEC</strain>
    </source>
</reference>
<evidence type="ECO:0000255" key="1">
    <source>
        <dbReference type="HAMAP-Rule" id="MF_00435"/>
    </source>
</evidence>
<evidence type="ECO:0000255" key="2">
    <source>
        <dbReference type="PROSITE-ProRule" id="PRU01197"/>
    </source>
</evidence>
<evidence type="ECO:0000255" key="3">
    <source>
        <dbReference type="PROSITE-ProRule" id="PRU01198"/>
    </source>
</evidence>
<name>ILVC_ECO24</name>
<protein>
    <recommendedName>
        <fullName evidence="1">Ketol-acid reductoisomerase (NADP(+))</fullName>
        <shortName evidence="1">KARI</shortName>
        <ecNumber evidence="1">1.1.1.86</ecNumber>
    </recommendedName>
    <alternativeName>
        <fullName evidence="1">Acetohydroxy-acid isomeroreductase</fullName>
        <shortName evidence="1">AHIR</shortName>
    </alternativeName>
    <alternativeName>
        <fullName evidence="1">Alpha-keto-beta-hydroxylacyl reductoisomerase</fullName>
    </alternativeName>
    <alternativeName>
        <fullName evidence="1">Ketol-acid reductoisomerase type 2</fullName>
    </alternativeName>
    <alternativeName>
        <fullName evidence="1">Ketol-acid reductoisomerase type II</fullName>
    </alternativeName>
</protein>
<dbReference type="EC" id="1.1.1.86" evidence="1"/>
<dbReference type="EMBL" id="CP000800">
    <property type="protein sequence ID" value="ABV17975.1"/>
    <property type="molecule type" value="Genomic_DNA"/>
</dbReference>
<dbReference type="RefSeq" id="WP_000024951.1">
    <property type="nucleotide sequence ID" value="NC_009801.1"/>
</dbReference>
<dbReference type="SMR" id="A7ZTX6"/>
<dbReference type="GeneID" id="75204765"/>
<dbReference type="KEGG" id="ecw:EcE24377A_4285"/>
<dbReference type="HOGENOM" id="CLU_551905_0_0_6"/>
<dbReference type="UniPathway" id="UPA00047">
    <property type="reaction ID" value="UER00056"/>
</dbReference>
<dbReference type="UniPathway" id="UPA00049">
    <property type="reaction ID" value="UER00060"/>
</dbReference>
<dbReference type="Proteomes" id="UP000001122">
    <property type="component" value="Chromosome"/>
</dbReference>
<dbReference type="GO" id="GO:0005829">
    <property type="term" value="C:cytosol"/>
    <property type="evidence" value="ECO:0007669"/>
    <property type="project" value="TreeGrafter"/>
</dbReference>
<dbReference type="GO" id="GO:0004455">
    <property type="term" value="F:ketol-acid reductoisomerase activity"/>
    <property type="evidence" value="ECO:0007669"/>
    <property type="project" value="UniProtKB-UniRule"/>
</dbReference>
<dbReference type="GO" id="GO:0000287">
    <property type="term" value="F:magnesium ion binding"/>
    <property type="evidence" value="ECO:0007669"/>
    <property type="project" value="UniProtKB-UniRule"/>
</dbReference>
<dbReference type="GO" id="GO:0009097">
    <property type="term" value="P:isoleucine biosynthetic process"/>
    <property type="evidence" value="ECO:0007669"/>
    <property type="project" value="UniProtKB-UniRule"/>
</dbReference>
<dbReference type="GO" id="GO:0009099">
    <property type="term" value="P:L-valine biosynthetic process"/>
    <property type="evidence" value="ECO:0007669"/>
    <property type="project" value="UniProtKB-UniRule"/>
</dbReference>
<dbReference type="FunFam" id="1.10.1040.10:FF:000007">
    <property type="entry name" value="Ketol-acid reductoisomerase (NADP(+))"/>
    <property type="match status" value="1"/>
</dbReference>
<dbReference type="FunFam" id="3.40.50.720:FF:000043">
    <property type="entry name" value="Ketol-acid reductoisomerase (NADP(+))"/>
    <property type="match status" value="1"/>
</dbReference>
<dbReference type="Gene3D" id="1.10.1040.10">
    <property type="entry name" value="N-(1-d-carboxylethyl)-l-norvaline Dehydrogenase, domain 2"/>
    <property type="match status" value="1"/>
</dbReference>
<dbReference type="Gene3D" id="3.40.50.720">
    <property type="entry name" value="NAD(P)-binding Rossmann-like Domain"/>
    <property type="match status" value="1"/>
</dbReference>
<dbReference type="HAMAP" id="MF_00435">
    <property type="entry name" value="IlvC"/>
    <property type="match status" value="1"/>
</dbReference>
<dbReference type="InterPro" id="IPR008927">
    <property type="entry name" value="6-PGluconate_DH-like_C_sf"/>
</dbReference>
<dbReference type="InterPro" id="IPR013328">
    <property type="entry name" value="6PGD_dom2"/>
</dbReference>
<dbReference type="InterPro" id="IPR013023">
    <property type="entry name" value="KARI"/>
</dbReference>
<dbReference type="InterPro" id="IPR000506">
    <property type="entry name" value="KARI_C"/>
</dbReference>
<dbReference type="InterPro" id="IPR013116">
    <property type="entry name" value="KARI_N"/>
</dbReference>
<dbReference type="InterPro" id="IPR036291">
    <property type="entry name" value="NAD(P)-bd_dom_sf"/>
</dbReference>
<dbReference type="NCBIfam" id="TIGR00465">
    <property type="entry name" value="ilvC"/>
    <property type="match status" value="1"/>
</dbReference>
<dbReference type="NCBIfam" id="NF003557">
    <property type="entry name" value="PRK05225.1"/>
    <property type="match status" value="1"/>
</dbReference>
<dbReference type="PANTHER" id="PTHR21371">
    <property type="entry name" value="KETOL-ACID REDUCTOISOMERASE, MITOCHONDRIAL"/>
    <property type="match status" value="1"/>
</dbReference>
<dbReference type="PANTHER" id="PTHR21371:SF1">
    <property type="entry name" value="KETOL-ACID REDUCTOISOMERASE, MITOCHONDRIAL"/>
    <property type="match status" value="1"/>
</dbReference>
<dbReference type="Pfam" id="PF01450">
    <property type="entry name" value="KARI_C"/>
    <property type="match status" value="2"/>
</dbReference>
<dbReference type="Pfam" id="PF07991">
    <property type="entry name" value="KARI_N"/>
    <property type="match status" value="1"/>
</dbReference>
<dbReference type="SUPFAM" id="SSF48179">
    <property type="entry name" value="6-phosphogluconate dehydrogenase C-terminal domain-like"/>
    <property type="match status" value="2"/>
</dbReference>
<dbReference type="SUPFAM" id="SSF51735">
    <property type="entry name" value="NAD(P)-binding Rossmann-fold domains"/>
    <property type="match status" value="1"/>
</dbReference>
<dbReference type="PROSITE" id="PS51851">
    <property type="entry name" value="KARI_C"/>
    <property type="match status" value="2"/>
</dbReference>
<dbReference type="PROSITE" id="PS51850">
    <property type="entry name" value="KARI_N"/>
    <property type="match status" value="1"/>
</dbReference>
<feature type="chain" id="PRO_1000060228" description="Ketol-acid reductoisomerase (NADP(+))">
    <location>
        <begin position="1"/>
        <end position="491"/>
    </location>
</feature>
<feature type="domain" description="KARI N-terminal Rossmann" evidence="2">
    <location>
        <begin position="15"/>
        <end position="208"/>
    </location>
</feature>
<feature type="domain" description="KARI C-terminal knotted 1" evidence="3">
    <location>
        <begin position="209"/>
        <end position="344"/>
    </location>
</feature>
<feature type="domain" description="KARI C-terminal knotted 2" evidence="3">
    <location>
        <begin position="345"/>
        <end position="484"/>
    </location>
</feature>
<feature type="active site" evidence="1">
    <location>
        <position position="132"/>
    </location>
</feature>
<feature type="binding site" evidence="1">
    <location>
        <begin position="45"/>
        <end position="48"/>
    </location>
    <ligand>
        <name>NADP(+)</name>
        <dbReference type="ChEBI" id="CHEBI:58349"/>
    </ligand>
</feature>
<feature type="binding site" evidence="1">
    <location>
        <position position="68"/>
    </location>
    <ligand>
        <name>NADP(+)</name>
        <dbReference type="ChEBI" id="CHEBI:58349"/>
    </ligand>
</feature>
<feature type="binding site" evidence="1">
    <location>
        <position position="76"/>
    </location>
    <ligand>
        <name>NADP(+)</name>
        <dbReference type="ChEBI" id="CHEBI:58349"/>
    </ligand>
</feature>
<feature type="binding site" evidence="1">
    <location>
        <position position="78"/>
    </location>
    <ligand>
        <name>NADP(+)</name>
        <dbReference type="ChEBI" id="CHEBI:58349"/>
    </ligand>
</feature>
<feature type="binding site" evidence="1">
    <location>
        <begin position="108"/>
        <end position="110"/>
    </location>
    <ligand>
        <name>NADP(+)</name>
        <dbReference type="ChEBI" id="CHEBI:58349"/>
    </ligand>
</feature>
<feature type="binding site" evidence="1">
    <location>
        <position position="158"/>
    </location>
    <ligand>
        <name>NADP(+)</name>
        <dbReference type="ChEBI" id="CHEBI:58349"/>
    </ligand>
</feature>
<feature type="binding site" evidence="1">
    <location>
        <position position="217"/>
    </location>
    <ligand>
        <name>Mg(2+)</name>
        <dbReference type="ChEBI" id="CHEBI:18420"/>
        <label>1</label>
    </ligand>
</feature>
<feature type="binding site" evidence="1">
    <location>
        <position position="217"/>
    </location>
    <ligand>
        <name>Mg(2+)</name>
        <dbReference type="ChEBI" id="CHEBI:18420"/>
        <label>2</label>
    </ligand>
</feature>
<feature type="binding site" evidence="1">
    <location>
        <position position="221"/>
    </location>
    <ligand>
        <name>Mg(2+)</name>
        <dbReference type="ChEBI" id="CHEBI:18420"/>
        <label>1</label>
    </ligand>
</feature>
<feature type="binding site" evidence="1">
    <location>
        <position position="389"/>
    </location>
    <ligand>
        <name>Mg(2+)</name>
        <dbReference type="ChEBI" id="CHEBI:18420"/>
        <label>2</label>
    </ligand>
</feature>
<feature type="binding site" evidence="1">
    <location>
        <position position="393"/>
    </location>
    <ligand>
        <name>Mg(2+)</name>
        <dbReference type="ChEBI" id="CHEBI:18420"/>
        <label>2</label>
    </ligand>
</feature>
<feature type="binding site" evidence="1">
    <location>
        <position position="414"/>
    </location>
    <ligand>
        <name>substrate</name>
    </ligand>
</feature>
<comment type="function">
    <text evidence="1">Involved in the biosynthesis of branched-chain amino acids (BCAA). Catalyzes an alkyl-migration followed by a ketol-acid reduction of (S)-2-acetolactate (S2AL) to yield (R)-2,3-dihydroxy-isovalerate. In the isomerase reaction, S2AL is rearranged via a Mg-dependent methyl migration to produce 3-hydroxy-3-methyl-2-ketobutyrate (HMKB). In the reductase reaction, this 2-ketoacid undergoes a metal-dependent reduction by NADPH to yield (R)-2,3-dihydroxy-isovalerate.</text>
</comment>
<comment type="catalytic activity">
    <reaction evidence="1">
        <text>(2R)-2,3-dihydroxy-3-methylbutanoate + NADP(+) = (2S)-2-acetolactate + NADPH + H(+)</text>
        <dbReference type="Rhea" id="RHEA:22068"/>
        <dbReference type="ChEBI" id="CHEBI:15378"/>
        <dbReference type="ChEBI" id="CHEBI:49072"/>
        <dbReference type="ChEBI" id="CHEBI:57783"/>
        <dbReference type="ChEBI" id="CHEBI:58349"/>
        <dbReference type="ChEBI" id="CHEBI:58476"/>
        <dbReference type="EC" id="1.1.1.86"/>
    </reaction>
</comment>
<comment type="catalytic activity">
    <reaction evidence="1">
        <text>(2R,3R)-2,3-dihydroxy-3-methylpentanoate + NADP(+) = (S)-2-ethyl-2-hydroxy-3-oxobutanoate + NADPH + H(+)</text>
        <dbReference type="Rhea" id="RHEA:13493"/>
        <dbReference type="ChEBI" id="CHEBI:15378"/>
        <dbReference type="ChEBI" id="CHEBI:49256"/>
        <dbReference type="ChEBI" id="CHEBI:49258"/>
        <dbReference type="ChEBI" id="CHEBI:57783"/>
        <dbReference type="ChEBI" id="CHEBI:58349"/>
        <dbReference type="EC" id="1.1.1.86"/>
    </reaction>
</comment>
<comment type="cofactor">
    <cofactor evidence="1">
        <name>Mg(2+)</name>
        <dbReference type="ChEBI" id="CHEBI:18420"/>
    </cofactor>
    <text evidence="1">Binds 2 magnesium ions per subunit.</text>
</comment>
<comment type="pathway">
    <text evidence="1">Amino-acid biosynthesis; L-isoleucine biosynthesis; L-isoleucine from 2-oxobutanoate: step 2/4.</text>
</comment>
<comment type="pathway">
    <text evidence="1">Amino-acid biosynthesis; L-valine biosynthesis; L-valine from pyruvate: step 2/4.</text>
</comment>
<comment type="similarity">
    <text evidence="1">Belongs to the ketol-acid reductoisomerase family.</text>
</comment>
<organism>
    <name type="scientific">Escherichia coli O139:H28 (strain E24377A / ETEC)</name>
    <dbReference type="NCBI Taxonomy" id="331111"/>
    <lineage>
        <taxon>Bacteria</taxon>
        <taxon>Pseudomonadati</taxon>
        <taxon>Pseudomonadota</taxon>
        <taxon>Gammaproteobacteria</taxon>
        <taxon>Enterobacterales</taxon>
        <taxon>Enterobacteriaceae</taxon>
        <taxon>Escherichia</taxon>
    </lineage>
</organism>